<keyword id="KW-0028">Amino-acid biosynthesis</keyword>
<keyword id="KW-0057">Aromatic amino acid biosynthesis</keyword>
<keyword id="KW-0210">Decarboxylase</keyword>
<keyword id="KW-0456">Lyase</keyword>
<keyword id="KW-1185">Reference proteome</keyword>
<keyword id="KW-0822">Tryptophan biosynthesis</keyword>
<dbReference type="EC" id="4.1.1.48" evidence="1"/>
<dbReference type="EMBL" id="AE016822">
    <property type="protein sequence ID" value="AAT88977.1"/>
    <property type="molecule type" value="Genomic_DNA"/>
</dbReference>
<dbReference type="SMR" id="Q6AF68"/>
<dbReference type="STRING" id="281090.Lxx11280"/>
<dbReference type="KEGG" id="lxx:Lxx11280"/>
<dbReference type="eggNOG" id="COG0134">
    <property type="taxonomic scope" value="Bacteria"/>
</dbReference>
<dbReference type="HOGENOM" id="CLU_034247_2_1_11"/>
<dbReference type="UniPathway" id="UPA00035">
    <property type="reaction ID" value="UER00043"/>
</dbReference>
<dbReference type="Proteomes" id="UP000001306">
    <property type="component" value="Chromosome"/>
</dbReference>
<dbReference type="GO" id="GO:0004425">
    <property type="term" value="F:indole-3-glycerol-phosphate synthase activity"/>
    <property type="evidence" value="ECO:0007669"/>
    <property type="project" value="UniProtKB-UniRule"/>
</dbReference>
<dbReference type="GO" id="GO:0004640">
    <property type="term" value="F:phosphoribosylanthranilate isomerase activity"/>
    <property type="evidence" value="ECO:0007669"/>
    <property type="project" value="TreeGrafter"/>
</dbReference>
<dbReference type="GO" id="GO:0000162">
    <property type="term" value="P:L-tryptophan biosynthetic process"/>
    <property type="evidence" value="ECO:0007669"/>
    <property type="project" value="UniProtKB-UniRule"/>
</dbReference>
<dbReference type="CDD" id="cd00331">
    <property type="entry name" value="IGPS"/>
    <property type="match status" value="1"/>
</dbReference>
<dbReference type="FunFam" id="3.20.20.70:FF:000024">
    <property type="entry name" value="Indole-3-glycerol phosphate synthase"/>
    <property type="match status" value="1"/>
</dbReference>
<dbReference type="Gene3D" id="3.20.20.70">
    <property type="entry name" value="Aldolase class I"/>
    <property type="match status" value="1"/>
</dbReference>
<dbReference type="HAMAP" id="MF_00134_B">
    <property type="entry name" value="IGPS_B"/>
    <property type="match status" value="1"/>
</dbReference>
<dbReference type="InterPro" id="IPR013785">
    <property type="entry name" value="Aldolase_TIM"/>
</dbReference>
<dbReference type="InterPro" id="IPR045186">
    <property type="entry name" value="Indole-3-glycerol_P_synth"/>
</dbReference>
<dbReference type="InterPro" id="IPR013798">
    <property type="entry name" value="Indole-3-glycerol_P_synth_dom"/>
</dbReference>
<dbReference type="InterPro" id="IPR001468">
    <property type="entry name" value="Indole-3-GlycerolPSynthase_CS"/>
</dbReference>
<dbReference type="InterPro" id="IPR011060">
    <property type="entry name" value="RibuloseP-bd_barrel"/>
</dbReference>
<dbReference type="NCBIfam" id="NF001369">
    <property type="entry name" value="PRK00278.1-1"/>
    <property type="match status" value="1"/>
</dbReference>
<dbReference type="PANTHER" id="PTHR22854:SF2">
    <property type="entry name" value="INDOLE-3-GLYCEROL-PHOSPHATE SYNTHASE"/>
    <property type="match status" value="1"/>
</dbReference>
<dbReference type="PANTHER" id="PTHR22854">
    <property type="entry name" value="TRYPTOPHAN BIOSYNTHESIS PROTEIN"/>
    <property type="match status" value="1"/>
</dbReference>
<dbReference type="Pfam" id="PF00218">
    <property type="entry name" value="IGPS"/>
    <property type="match status" value="1"/>
</dbReference>
<dbReference type="SUPFAM" id="SSF51366">
    <property type="entry name" value="Ribulose-phoshate binding barrel"/>
    <property type="match status" value="1"/>
</dbReference>
<dbReference type="PROSITE" id="PS00614">
    <property type="entry name" value="IGPS"/>
    <property type="match status" value="1"/>
</dbReference>
<proteinExistence type="inferred from homology"/>
<reference key="1">
    <citation type="journal article" date="2004" name="Mol. Plant Microbe Interact.">
        <title>The genome sequence of the Gram-positive sugarcane pathogen Leifsonia xyli subsp. xyli.</title>
        <authorList>
            <person name="Monteiro-Vitorello C.B."/>
            <person name="Camargo L.E.A."/>
            <person name="Van Sluys M.A."/>
            <person name="Kitajima J.P."/>
            <person name="Truffi D."/>
            <person name="do Amaral A.M."/>
            <person name="Harakava R."/>
            <person name="de Oliveira J.C.F."/>
            <person name="Wood D."/>
            <person name="de Oliveira M.C."/>
            <person name="Miyaki C.Y."/>
            <person name="Takita M.A."/>
            <person name="da Silva A.C.R."/>
            <person name="Furlan L.R."/>
            <person name="Carraro D.M."/>
            <person name="Camarotte G."/>
            <person name="Almeida N.F. Jr."/>
            <person name="Carrer H."/>
            <person name="Coutinho L.L."/>
            <person name="El-Dorry H.A."/>
            <person name="Ferro M.I.T."/>
            <person name="Gagliardi P.R."/>
            <person name="Giglioti E."/>
            <person name="Goldman M.H.S."/>
            <person name="Goldman G.H."/>
            <person name="Kimura E.T."/>
            <person name="Ferro E.S."/>
            <person name="Kuramae E.E."/>
            <person name="Lemos E.G.M."/>
            <person name="Lemos M.V.F."/>
            <person name="Mauro S.M.Z."/>
            <person name="Machado M.A."/>
            <person name="Marino C.L."/>
            <person name="Menck C.F."/>
            <person name="Nunes L.R."/>
            <person name="Oliveira R.C."/>
            <person name="Pereira G.G."/>
            <person name="Siqueira W."/>
            <person name="de Souza A.A."/>
            <person name="Tsai S.M."/>
            <person name="Zanca A.S."/>
            <person name="Simpson A.J.G."/>
            <person name="Brumbley S.M."/>
            <person name="Setubal J.C."/>
        </authorList>
    </citation>
    <scope>NUCLEOTIDE SEQUENCE [LARGE SCALE GENOMIC DNA]</scope>
    <source>
        <strain>CTCB07</strain>
    </source>
</reference>
<feature type="chain" id="PRO_0000154227" description="Indole-3-glycerol phosphate synthase">
    <location>
        <begin position="1"/>
        <end position="260"/>
    </location>
</feature>
<comment type="catalytic activity">
    <reaction evidence="1">
        <text>1-(2-carboxyphenylamino)-1-deoxy-D-ribulose 5-phosphate + H(+) = (1S,2R)-1-C-(indol-3-yl)glycerol 3-phosphate + CO2 + H2O</text>
        <dbReference type="Rhea" id="RHEA:23476"/>
        <dbReference type="ChEBI" id="CHEBI:15377"/>
        <dbReference type="ChEBI" id="CHEBI:15378"/>
        <dbReference type="ChEBI" id="CHEBI:16526"/>
        <dbReference type="ChEBI" id="CHEBI:58613"/>
        <dbReference type="ChEBI" id="CHEBI:58866"/>
        <dbReference type="EC" id="4.1.1.48"/>
    </reaction>
</comment>
<comment type="pathway">
    <text evidence="1">Amino-acid biosynthesis; L-tryptophan biosynthesis; L-tryptophan from chorismate: step 4/5.</text>
</comment>
<comment type="similarity">
    <text evidence="1">Belongs to the TrpC family.</text>
</comment>
<evidence type="ECO:0000255" key="1">
    <source>
        <dbReference type="HAMAP-Rule" id="MF_00134"/>
    </source>
</evidence>
<protein>
    <recommendedName>
        <fullName evidence="1">Indole-3-glycerol phosphate synthase</fullName>
        <shortName evidence="1">IGPS</shortName>
        <ecNumber evidence="1">4.1.1.48</ecNumber>
    </recommendedName>
</protein>
<accession>Q6AF68</accession>
<gene>
    <name evidence="1" type="primary">trpC</name>
    <name type="ordered locus">Lxx11280</name>
</gene>
<name>TRPC_LEIXX</name>
<sequence>MPVDLLADLTAGALEDAARRRADRPLSAVEAVAAAQAPPLPALDALAPADRVKVIAEVKRASPSRGDLAEIPDPAALARLYETGGASAISVLTEERRFRGSLADLESVRAAVSLPVLRKEFIADPYQVFEARAAGADLVLLIVAALEQRRLAELHDLIVELGMTPLVEAHTADELSRAFDTGAKLVGVNARDLSTFELDRNLFGRLAERYPSDVIRVAESAVKSAADVAHYRAAGAHVVLVGEALVTSDPVATLSEFRGV</sequence>
<organism>
    <name type="scientific">Leifsonia xyli subsp. xyli (strain CTCB07)</name>
    <dbReference type="NCBI Taxonomy" id="281090"/>
    <lineage>
        <taxon>Bacteria</taxon>
        <taxon>Bacillati</taxon>
        <taxon>Actinomycetota</taxon>
        <taxon>Actinomycetes</taxon>
        <taxon>Micrococcales</taxon>
        <taxon>Microbacteriaceae</taxon>
        <taxon>Leifsonia</taxon>
    </lineage>
</organism>